<accession>Q65YR7</accession>
<accession>Q54VD4</accession>
<proteinExistence type="evidence at protein level"/>
<gene>
    <name type="primary">cpiB</name>
    <name type="ORF">DDB_G0280439</name>
</gene>
<organism>
    <name type="scientific">Dictyostelium discoideum</name>
    <name type="common">Social amoeba</name>
    <dbReference type="NCBI Taxonomy" id="44689"/>
    <lineage>
        <taxon>Eukaryota</taxon>
        <taxon>Amoebozoa</taxon>
        <taxon>Evosea</taxon>
        <taxon>Eumycetozoa</taxon>
        <taxon>Dictyostelia</taxon>
        <taxon>Dictyosteliales</taxon>
        <taxon>Dictyosteliaceae</taxon>
        <taxon>Dictyostelium</taxon>
    </lineage>
</organism>
<evidence type="ECO:0000250" key="1"/>
<evidence type="ECO:0000269" key="2">
    <source>
    </source>
</evidence>
<evidence type="ECO:0000305" key="3"/>
<dbReference type="EMBL" id="AB189919">
    <property type="protein sequence ID" value="BAD44694.1"/>
    <property type="molecule type" value="mRNA"/>
</dbReference>
<dbReference type="EMBL" id="AAFI02000036">
    <property type="protein sequence ID" value="EAL67198.1"/>
    <property type="molecule type" value="Genomic_DNA"/>
</dbReference>
<dbReference type="RefSeq" id="XP_641175.1">
    <property type="nucleotide sequence ID" value="XM_636083.1"/>
</dbReference>
<dbReference type="PDB" id="8GQQ">
    <property type="method" value="X-ray"/>
    <property type="resolution" value="1.07 A"/>
    <property type="chains" value="A=1-95"/>
</dbReference>
<dbReference type="PDBsum" id="8GQQ"/>
<dbReference type="SMR" id="Q65YR7"/>
<dbReference type="FunCoup" id="Q65YR7">
    <property type="interactions" value="27"/>
</dbReference>
<dbReference type="STRING" id="44689.Q65YR7"/>
<dbReference type="PaxDb" id="44689-DDB0220658"/>
<dbReference type="EnsemblProtists" id="EAL67198">
    <property type="protein sequence ID" value="EAL67198"/>
    <property type="gene ID" value="DDB_G0280439"/>
</dbReference>
<dbReference type="GeneID" id="8622555"/>
<dbReference type="KEGG" id="ddi:DDB_G0280439"/>
<dbReference type="dictyBase" id="DDB_G0280439">
    <property type="gene designation" value="cpiB"/>
</dbReference>
<dbReference type="VEuPathDB" id="AmoebaDB:DDB_G0280439"/>
<dbReference type="eggNOG" id="ENOG502SF2X">
    <property type="taxonomic scope" value="Eukaryota"/>
</dbReference>
<dbReference type="HOGENOM" id="CLU_150234_2_0_1"/>
<dbReference type="InParanoid" id="Q65YR7"/>
<dbReference type="OMA" id="HIHVRAH"/>
<dbReference type="PhylomeDB" id="Q65YR7"/>
<dbReference type="Reactome" id="R-DDI-6798695">
    <property type="pathway name" value="Neutrophil degranulation"/>
</dbReference>
<dbReference type="PRO" id="PR:Q65YR7"/>
<dbReference type="Proteomes" id="UP000002195">
    <property type="component" value="Chromosome 3"/>
</dbReference>
<dbReference type="GO" id="GO:0005829">
    <property type="term" value="C:cytosol"/>
    <property type="evidence" value="ECO:0000314"/>
    <property type="project" value="dictyBase"/>
</dbReference>
<dbReference type="GO" id="GO:0004869">
    <property type="term" value="F:cysteine-type endopeptidase inhibitor activity"/>
    <property type="evidence" value="ECO:0000314"/>
    <property type="project" value="dictyBase"/>
</dbReference>
<dbReference type="GO" id="GO:0030162">
    <property type="term" value="P:regulation of proteolysis"/>
    <property type="evidence" value="ECO:0000314"/>
    <property type="project" value="dictyBase"/>
</dbReference>
<dbReference type="FunFam" id="3.10.450.10:FF:000001">
    <property type="entry name" value="Cystatin-A"/>
    <property type="match status" value="1"/>
</dbReference>
<dbReference type="Gene3D" id="3.10.450.10">
    <property type="match status" value="1"/>
</dbReference>
<dbReference type="InterPro" id="IPR000010">
    <property type="entry name" value="Cystatin_dom"/>
</dbReference>
<dbReference type="InterPro" id="IPR046350">
    <property type="entry name" value="Cystatin_sf"/>
</dbReference>
<dbReference type="InterPro" id="IPR001713">
    <property type="entry name" value="Prot_inh_stefin"/>
</dbReference>
<dbReference type="PANTHER" id="PTHR11414:SF21">
    <property type="entry name" value="CYSTATIN 14A, TANDEM DUPLICATE 1-RELATED"/>
    <property type="match status" value="1"/>
</dbReference>
<dbReference type="PANTHER" id="PTHR11414">
    <property type="entry name" value="CYSTATIN FAMILY MEMBER"/>
    <property type="match status" value="1"/>
</dbReference>
<dbReference type="Pfam" id="PF00031">
    <property type="entry name" value="Cystatin"/>
    <property type="match status" value="1"/>
</dbReference>
<dbReference type="PRINTS" id="PR00295">
    <property type="entry name" value="STEFINA"/>
</dbReference>
<dbReference type="SUPFAM" id="SSF54403">
    <property type="entry name" value="Cystatin/monellin"/>
    <property type="match status" value="1"/>
</dbReference>
<sequence>MTKVGGLGATHQADKTVEDIVNAVKPSIQSKLGTNISNLKVISYKTQLVNGTNYFVKVRTENGYAHLRIYKPFSGAASLVSVQDGKAKDDEITYF</sequence>
<feature type="chain" id="PRO_0000327786" description="Cystatin-A2">
    <location>
        <begin position="1"/>
        <end position="95"/>
    </location>
</feature>
<feature type="short sequence motif" description="Secondary area of contact" evidence="1">
    <location>
        <begin position="47"/>
        <end position="51"/>
    </location>
</feature>
<feature type="site" description="Reactive site" evidence="1">
    <location>
        <position position="5"/>
    </location>
</feature>
<reference key="1">
    <citation type="journal article" date="2004" name="Biol. Chem.">
        <title>Identification of cysteine protease inhibitors that belong to cystatin family 1 in the cellular slime mold Dictyostelium discoideum.</title>
        <authorList>
            <person name="El-Halawany M.S."/>
            <person name="Ohkouchi S."/>
            <person name="Shibata H."/>
            <person name="Hitomi K."/>
            <person name="Maki M."/>
        </authorList>
    </citation>
    <scope>NUCLEOTIDE SEQUENCE [MRNA]</scope>
    <scope>FUNCTION</scope>
    <scope>SUBCELLULAR LOCATION</scope>
    <scope>DEVELOPMENTAL STAGE</scope>
    <source>
        <strain>AX4</strain>
    </source>
</reference>
<reference key="2">
    <citation type="journal article" date="2005" name="Nature">
        <title>The genome of the social amoeba Dictyostelium discoideum.</title>
        <authorList>
            <person name="Eichinger L."/>
            <person name="Pachebat J.A."/>
            <person name="Gloeckner G."/>
            <person name="Rajandream M.A."/>
            <person name="Sucgang R."/>
            <person name="Berriman M."/>
            <person name="Song J."/>
            <person name="Olsen R."/>
            <person name="Szafranski K."/>
            <person name="Xu Q."/>
            <person name="Tunggal B."/>
            <person name="Kummerfeld S."/>
            <person name="Madera M."/>
            <person name="Konfortov B.A."/>
            <person name="Rivero F."/>
            <person name="Bankier A.T."/>
            <person name="Lehmann R."/>
            <person name="Hamlin N."/>
            <person name="Davies R."/>
            <person name="Gaudet P."/>
            <person name="Fey P."/>
            <person name="Pilcher K."/>
            <person name="Chen G."/>
            <person name="Saunders D."/>
            <person name="Sodergren E.J."/>
            <person name="Davis P."/>
            <person name="Kerhornou A."/>
            <person name="Nie X."/>
            <person name="Hall N."/>
            <person name="Anjard C."/>
            <person name="Hemphill L."/>
            <person name="Bason N."/>
            <person name="Farbrother P."/>
            <person name="Desany B."/>
            <person name="Just E."/>
            <person name="Morio T."/>
            <person name="Rost R."/>
            <person name="Churcher C.M."/>
            <person name="Cooper J."/>
            <person name="Haydock S."/>
            <person name="van Driessche N."/>
            <person name="Cronin A."/>
            <person name="Goodhead I."/>
            <person name="Muzny D.M."/>
            <person name="Mourier T."/>
            <person name="Pain A."/>
            <person name="Lu M."/>
            <person name="Harper D."/>
            <person name="Lindsay R."/>
            <person name="Hauser H."/>
            <person name="James K.D."/>
            <person name="Quiles M."/>
            <person name="Madan Babu M."/>
            <person name="Saito T."/>
            <person name="Buchrieser C."/>
            <person name="Wardroper A."/>
            <person name="Felder M."/>
            <person name="Thangavelu M."/>
            <person name="Johnson D."/>
            <person name="Knights A."/>
            <person name="Loulseged H."/>
            <person name="Mungall K.L."/>
            <person name="Oliver K."/>
            <person name="Price C."/>
            <person name="Quail M.A."/>
            <person name="Urushihara H."/>
            <person name="Hernandez J."/>
            <person name="Rabbinowitsch E."/>
            <person name="Steffen D."/>
            <person name="Sanders M."/>
            <person name="Ma J."/>
            <person name="Kohara Y."/>
            <person name="Sharp S."/>
            <person name="Simmonds M.N."/>
            <person name="Spiegler S."/>
            <person name="Tivey A."/>
            <person name="Sugano S."/>
            <person name="White B."/>
            <person name="Walker D."/>
            <person name="Woodward J.R."/>
            <person name="Winckler T."/>
            <person name="Tanaka Y."/>
            <person name="Shaulsky G."/>
            <person name="Schleicher M."/>
            <person name="Weinstock G.M."/>
            <person name="Rosenthal A."/>
            <person name="Cox E.C."/>
            <person name="Chisholm R.L."/>
            <person name="Gibbs R.A."/>
            <person name="Loomis W.F."/>
            <person name="Platzer M."/>
            <person name="Kay R.R."/>
            <person name="Williams J.G."/>
            <person name="Dear P.H."/>
            <person name="Noegel A.A."/>
            <person name="Barrell B.G."/>
            <person name="Kuspa A."/>
        </authorList>
    </citation>
    <scope>NUCLEOTIDE SEQUENCE [LARGE SCALE GENOMIC DNA]</scope>
    <source>
        <strain>AX4</strain>
    </source>
</reference>
<name>CYTA2_DICDI</name>
<comment type="function">
    <text evidence="2">Intracellular thiol proteinase inhibitor. Inhibits cathepsin B, but not papain.</text>
</comment>
<comment type="subcellular location">
    <subcellularLocation>
        <location evidence="2">Cytoplasm</location>
    </subcellularLocation>
</comment>
<comment type="developmental stage">
    <text evidence="2">First detected at the aggregation stage and peaks during culmination.</text>
</comment>
<comment type="similarity">
    <text evidence="3">Belongs to the cystatin family.</text>
</comment>
<keyword id="KW-0002">3D-structure</keyword>
<keyword id="KW-0963">Cytoplasm</keyword>
<keyword id="KW-0646">Protease inhibitor</keyword>
<keyword id="KW-1185">Reference proteome</keyword>
<keyword id="KW-0789">Thiol protease inhibitor</keyword>
<protein>
    <recommendedName>
        <fullName>Cystatin-A2</fullName>
    </recommendedName>
</protein>